<keyword id="KW-0029">Amino-acid transport</keyword>
<keyword id="KW-0067">ATP-binding</keyword>
<keyword id="KW-1003">Cell membrane</keyword>
<keyword id="KW-0472">Membrane</keyword>
<keyword id="KW-0547">Nucleotide-binding</keyword>
<keyword id="KW-1278">Translocase</keyword>
<keyword id="KW-0813">Transport</keyword>
<comment type="function">
    <text evidence="1">Part of the ABC transporter complex MetNIQ involved in methionine import. Responsible for energy coupling to the transport system.</text>
</comment>
<comment type="catalytic activity">
    <reaction evidence="1">
        <text>L-methionine(out) + ATP + H2O = L-methionine(in) + ADP + phosphate + H(+)</text>
        <dbReference type="Rhea" id="RHEA:29779"/>
        <dbReference type="ChEBI" id="CHEBI:15377"/>
        <dbReference type="ChEBI" id="CHEBI:15378"/>
        <dbReference type="ChEBI" id="CHEBI:30616"/>
        <dbReference type="ChEBI" id="CHEBI:43474"/>
        <dbReference type="ChEBI" id="CHEBI:57844"/>
        <dbReference type="ChEBI" id="CHEBI:456216"/>
        <dbReference type="EC" id="7.4.2.11"/>
    </reaction>
</comment>
<comment type="catalytic activity">
    <reaction evidence="1">
        <text>D-methionine(out) + ATP + H2O = D-methionine(in) + ADP + phosphate + H(+)</text>
        <dbReference type="Rhea" id="RHEA:29767"/>
        <dbReference type="ChEBI" id="CHEBI:15377"/>
        <dbReference type="ChEBI" id="CHEBI:15378"/>
        <dbReference type="ChEBI" id="CHEBI:30616"/>
        <dbReference type="ChEBI" id="CHEBI:43474"/>
        <dbReference type="ChEBI" id="CHEBI:57932"/>
        <dbReference type="ChEBI" id="CHEBI:456216"/>
        <dbReference type="EC" id="7.4.2.11"/>
    </reaction>
</comment>
<comment type="subunit">
    <text evidence="1">The complex is composed of two ATP-binding proteins (MetN), two transmembrane proteins (MetI) and a solute-binding protein (MetQ).</text>
</comment>
<comment type="subcellular location">
    <subcellularLocation>
        <location evidence="1">Cell membrane</location>
        <topology evidence="1">Peripheral membrane protein</topology>
    </subcellularLocation>
</comment>
<comment type="similarity">
    <text evidence="1">Belongs to the ABC transporter superfamily. Methionine importer (TC 3.A.1.24) family.</text>
</comment>
<reference key="1">
    <citation type="journal article" date="2006" name="Proc. Natl. Acad. Sci. U.S.A.">
        <title>Molecular genetic anatomy of inter- and intraserotype variation in the human bacterial pathogen group A Streptococcus.</title>
        <authorList>
            <person name="Beres S.B."/>
            <person name="Richter E.W."/>
            <person name="Nagiec M.J."/>
            <person name="Sumby P."/>
            <person name="Porcella S.F."/>
            <person name="DeLeo F.R."/>
            <person name="Musser J.M."/>
        </authorList>
    </citation>
    <scope>NUCLEOTIDE SEQUENCE [LARGE SCALE GENOMIC DNA]</scope>
    <source>
        <strain>MGAS10270</strain>
    </source>
</reference>
<proteinExistence type="inferred from homology"/>
<dbReference type="EC" id="7.4.2.11" evidence="1"/>
<dbReference type="EMBL" id="CP000260">
    <property type="protein sequence ID" value="ABF33334.1"/>
    <property type="molecule type" value="Genomic_DNA"/>
</dbReference>
<dbReference type="SMR" id="Q1JII9"/>
<dbReference type="KEGG" id="sph:MGAS10270_Spy0269"/>
<dbReference type="HOGENOM" id="CLU_000604_1_3_9"/>
<dbReference type="Proteomes" id="UP000002436">
    <property type="component" value="Chromosome"/>
</dbReference>
<dbReference type="GO" id="GO:0005886">
    <property type="term" value="C:plasma membrane"/>
    <property type="evidence" value="ECO:0007669"/>
    <property type="project" value="UniProtKB-SubCell"/>
</dbReference>
<dbReference type="GO" id="GO:0033232">
    <property type="term" value="F:ABC-type D-methionine transporter activity"/>
    <property type="evidence" value="ECO:0007669"/>
    <property type="project" value="UniProtKB-EC"/>
</dbReference>
<dbReference type="GO" id="GO:0005524">
    <property type="term" value="F:ATP binding"/>
    <property type="evidence" value="ECO:0007669"/>
    <property type="project" value="UniProtKB-KW"/>
</dbReference>
<dbReference type="GO" id="GO:0016887">
    <property type="term" value="F:ATP hydrolysis activity"/>
    <property type="evidence" value="ECO:0007669"/>
    <property type="project" value="InterPro"/>
</dbReference>
<dbReference type="CDD" id="cd03258">
    <property type="entry name" value="ABC_MetN_methionine_transporter"/>
    <property type="match status" value="1"/>
</dbReference>
<dbReference type="Gene3D" id="3.30.70.260">
    <property type="match status" value="1"/>
</dbReference>
<dbReference type="Gene3D" id="3.40.50.300">
    <property type="entry name" value="P-loop containing nucleotide triphosphate hydrolases"/>
    <property type="match status" value="1"/>
</dbReference>
<dbReference type="InterPro" id="IPR003593">
    <property type="entry name" value="AAA+_ATPase"/>
</dbReference>
<dbReference type="InterPro" id="IPR003439">
    <property type="entry name" value="ABC_transporter-like_ATP-bd"/>
</dbReference>
<dbReference type="InterPro" id="IPR017871">
    <property type="entry name" value="ABC_transporter-like_CS"/>
</dbReference>
<dbReference type="InterPro" id="IPR045865">
    <property type="entry name" value="ACT-like_dom_sf"/>
</dbReference>
<dbReference type="InterPro" id="IPR041701">
    <property type="entry name" value="MetN_ABC"/>
</dbReference>
<dbReference type="InterPro" id="IPR050086">
    <property type="entry name" value="MetN_ABC_transporter-like"/>
</dbReference>
<dbReference type="InterPro" id="IPR018449">
    <property type="entry name" value="NIL_domain"/>
</dbReference>
<dbReference type="InterPro" id="IPR027417">
    <property type="entry name" value="P-loop_NTPase"/>
</dbReference>
<dbReference type="PANTHER" id="PTHR43166">
    <property type="entry name" value="AMINO ACID IMPORT ATP-BINDING PROTEIN"/>
    <property type="match status" value="1"/>
</dbReference>
<dbReference type="PANTHER" id="PTHR43166:SF30">
    <property type="entry name" value="METHIONINE IMPORT ATP-BINDING PROTEIN METN"/>
    <property type="match status" value="1"/>
</dbReference>
<dbReference type="Pfam" id="PF00005">
    <property type="entry name" value="ABC_tran"/>
    <property type="match status" value="1"/>
</dbReference>
<dbReference type="Pfam" id="PF09383">
    <property type="entry name" value="NIL"/>
    <property type="match status" value="1"/>
</dbReference>
<dbReference type="SMART" id="SM00382">
    <property type="entry name" value="AAA"/>
    <property type="match status" value="1"/>
</dbReference>
<dbReference type="SMART" id="SM00930">
    <property type="entry name" value="NIL"/>
    <property type="match status" value="1"/>
</dbReference>
<dbReference type="SUPFAM" id="SSF55021">
    <property type="entry name" value="ACT-like"/>
    <property type="match status" value="1"/>
</dbReference>
<dbReference type="SUPFAM" id="SSF52540">
    <property type="entry name" value="P-loop containing nucleoside triphosphate hydrolases"/>
    <property type="match status" value="1"/>
</dbReference>
<dbReference type="PROSITE" id="PS00211">
    <property type="entry name" value="ABC_TRANSPORTER_1"/>
    <property type="match status" value="1"/>
</dbReference>
<dbReference type="PROSITE" id="PS50893">
    <property type="entry name" value="ABC_TRANSPORTER_2"/>
    <property type="match status" value="1"/>
</dbReference>
<dbReference type="PROSITE" id="PS51264">
    <property type="entry name" value="METN"/>
    <property type="match status" value="1"/>
</dbReference>
<feature type="chain" id="PRO_0000270421" description="Methionine import ATP-binding protein MetN">
    <location>
        <begin position="1"/>
        <end position="354"/>
    </location>
</feature>
<feature type="domain" description="ABC transporter" evidence="1">
    <location>
        <begin position="8"/>
        <end position="250"/>
    </location>
</feature>
<feature type="binding site" evidence="1">
    <location>
        <begin position="42"/>
        <end position="49"/>
    </location>
    <ligand>
        <name>ATP</name>
        <dbReference type="ChEBI" id="CHEBI:30616"/>
    </ligand>
</feature>
<evidence type="ECO:0000255" key="1">
    <source>
        <dbReference type="HAMAP-Rule" id="MF_01719"/>
    </source>
</evidence>
<sequence>MNEAIIQLDHIDITFRQKKRVIEAVKDVTVHINQGDIYGIVGYSGAGKSTLVRVINLLQAPTNGKITVDGDVTFDQGKIQLSADALRQKRRDIGMIFQHFNLMAQKTAKENVAFALRHSSLSKTEKEHKVIELLELVGLSERADNYPAQLSGGQKQRVAIARALANDPKILISDEATSALDPKTTKQILALLQELNCKLGLTIVMITHEMQIVKDICNRVAVMQNGVLIEEGSVLDIFSNPKEALTQEFITTATGIDEALEKINQQDIVKHLPANALLAQLKYAGTSTDEPLLNSIYRQFEVTANILYGNIEILDHIPVGDMIVVLEGQAENILAAEKALHEAGVDVSILKRGA</sequence>
<name>METN_STRPD</name>
<gene>
    <name evidence="1" type="primary">metN</name>
    <name type="ordered locus">MGAS10270_Spy0269</name>
</gene>
<organism>
    <name type="scientific">Streptococcus pyogenes serotype M2 (strain MGAS10270)</name>
    <dbReference type="NCBI Taxonomy" id="370552"/>
    <lineage>
        <taxon>Bacteria</taxon>
        <taxon>Bacillati</taxon>
        <taxon>Bacillota</taxon>
        <taxon>Bacilli</taxon>
        <taxon>Lactobacillales</taxon>
        <taxon>Streptococcaceae</taxon>
        <taxon>Streptococcus</taxon>
    </lineage>
</organism>
<protein>
    <recommendedName>
        <fullName evidence="1">Methionine import ATP-binding protein MetN</fullName>
        <ecNumber evidence="1">7.4.2.11</ecNumber>
    </recommendedName>
</protein>
<accession>Q1JII9</accession>